<dbReference type="EMBL" id="AB218779">
    <property type="protein sequence ID" value="BAE94277.1"/>
    <property type="molecule type" value="mRNA"/>
</dbReference>
<dbReference type="RefSeq" id="NP_001071937.1">
    <property type="nucleotide sequence ID" value="NM_001078469.1"/>
</dbReference>
<dbReference type="SMR" id="Q1JV40"/>
<dbReference type="DIP" id="DIP-46135N"/>
<dbReference type="FunCoup" id="Q1JV40">
    <property type="interactions" value="4"/>
</dbReference>
<dbReference type="STRING" id="7719.ENSCINP00000026518"/>
<dbReference type="TCDB" id="1.A.51.1.3">
    <property type="family name" value="the voltage-gated proton channel (vpc) family"/>
</dbReference>
<dbReference type="Ensembl" id="ENSCINT00000026764.2">
    <property type="protein sequence ID" value="ENSCINP00000026518.2"/>
    <property type="gene ID" value="ENSCING00000014744.2"/>
</dbReference>
<dbReference type="GeneID" id="778897"/>
<dbReference type="KEGG" id="cin:778897"/>
<dbReference type="CTD" id="84329"/>
<dbReference type="eggNOG" id="ENOG502RX8B">
    <property type="taxonomic scope" value="Eukaryota"/>
</dbReference>
<dbReference type="GeneTree" id="ENSGT00940000174276"/>
<dbReference type="HOGENOM" id="CLU_799143_0_0_1"/>
<dbReference type="InParanoid" id="Q1JV40"/>
<dbReference type="OMA" id="KSHNMIN"/>
<dbReference type="OrthoDB" id="427456at2759"/>
<dbReference type="TreeFam" id="TF332056"/>
<dbReference type="Proteomes" id="UP000008144">
    <property type="component" value="Unassembled WGS sequence"/>
</dbReference>
<dbReference type="GO" id="GO:0034702">
    <property type="term" value="C:monoatomic ion channel complex"/>
    <property type="evidence" value="ECO:0007669"/>
    <property type="project" value="UniProtKB-KW"/>
</dbReference>
<dbReference type="GO" id="GO:0005886">
    <property type="term" value="C:plasma membrane"/>
    <property type="evidence" value="ECO:0000250"/>
    <property type="project" value="UniProtKB"/>
</dbReference>
<dbReference type="GO" id="GO:0030171">
    <property type="term" value="F:voltage-gated proton channel activity"/>
    <property type="evidence" value="ECO:0000250"/>
    <property type="project" value="UniProtKB"/>
</dbReference>
<dbReference type="GO" id="GO:0071467">
    <property type="term" value="P:cellular response to pH"/>
    <property type="evidence" value="ECO:0000250"/>
    <property type="project" value="UniProtKB"/>
</dbReference>
<dbReference type="GO" id="GO:0071294">
    <property type="term" value="P:cellular response to zinc ion"/>
    <property type="evidence" value="ECO:0000250"/>
    <property type="project" value="UniProtKB"/>
</dbReference>
<dbReference type="GO" id="GO:1902600">
    <property type="term" value="P:proton transmembrane transport"/>
    <property type="evidence" value="ECO:0000250"/>
    <property type="project" value="UniProtKB"/>
</dbReference>
<dbReference type="Gene3D" id="1.20.5.170">
    <property type="match status" value="1"/>
</dbReference>
<dbReference type="Gene3D" id="1.20.120.350">
    <property type="entry name" value="Voltage-gated potassium channels. Chain C"/>
    <property type="match status" value="1"/>
</dbReference>
<dbReference type="InterPro" id="IPR031846">
    <property type="entry name" value="Hvcn1"/>
</dbReference>
<dbReference type="InterPro" id="IPR005821">
    <property type="entry name" value="Ion_trans_dom"/>
</dbReference>
<dbReference type="InterPro" id="IPR027359">
    <property type="entry name" value="Volt_channel_dom_sf"/>
</dbReference>
<dbReference type="PANTHER" id="PTHR46480">
    <property type="entry name" value="F20B24.22"/>
    <property type="match status" value="1"/>
</dbReference>
<dbReference type="PANTHER" id="PTHR46480:SF1">
    <property type="entry name" value="VOLTAGE-GATED HYDROGEN CHANNEL 1"/>
    <property type="match status" value="1"/>
</dbReference>
<dbReference type="Pfam" id="PF00520">
    <property type="entry name" value="Ion_trans"/>
    <property type="match status" value="1"/>
</dbReference>
<dbReference type="SUPFAM" id="SSF81324">
    <property type="entry name" value="Voltage-gated potassium channels"/>
    <property type="match status" value="1"/>
</dbReference>
<proteinExistence type="evidence at transcript level"/>
<feature type="chain" id="PRO_0000342193" description="Voltage-gated hydrogen channel 1">
    <location>
        <begin position="1"/>
        <end position="342"/>
    </location>
</feature>
<feature type="topological domain" description="Cytoplasmic" evidence="1">
    <location>
        <begin position="1"/>
        <end position="148"/>
    </location>
</feature>
<feature type="transmembrane region" description="Helical; Name=Segment S1" evidence="1">
    <location>
        <begin position="149"/>
        <end position="169"/>
    </location>
</feature>
<feature type="topological domain" description="Extracellular" evidence="1">
    <location>
        <begin position="170"/>
        <end position="185"/>
    </location>
</feature>
<feature type="transmembrane region" description="Helical; Name=Segment S2" evidence="1">
    <location>
        <begin position="186"/>
        <end position="208"/>
    </location>
</feature>
<feature type="topological domain" description="Cytoplasmic" evidence="1">
    <location>
        <begin position="209"/>
        <end position="217"/>
    </location>
</feature>
<feature type="transmembrane region" description="Helical; Name=Segment S3" evidence="1">
    <location>
        <begin position="218"/>
        <end position="238"/>
    </location>
</feature>
<feature type="topological domain" description="Extracellular" evidence="1">
    <location>
        <begin position="239"/>
        <end position="247"/>
    </location>
</feature>
<feature type="transmembrane region" description="Helical; Name=Segment S4" evidence="1">
    <location>
        <begin position="248"/>
        <end position="268"/>
    </location>
</feature>
<feature type="topological domain" description="Cytoplasmic" evidence="1">
    <location>
        <begin position="269"/>
        <end position="342"/>
    </location>
</feature>
<feature type="region of interest" description="Disordered" evidence="3">
    <location>
        <begin position="1"/>
        <end position="20"/>
    </location>
</feature>
<feature type="region of interest" description="Disordered" evidence="3">
    <location>
        <begin position="74"/>
        <end position="102"/>
    </location>
</feature>
<feature type="coiled-coil region" evidence="2">
    <location>
        <begin position="271"/>
        <end position="315"/>
    </location>
</feature>
<feature type="compositionally biased region" description="Polar residues" evidence="3">
    <location>
        <begin position="86"/>
        <end position="102"/>
    </location>
</feature>
<protein>
    <recommendedName>
        <fullName>Voltage-gated hydrogen channel 1</fullName>
    </recommendedName>
    <alternativeName>
        <fullName>Hydrogen voltage-gated channel 1</fullName>
        <shortName>HV1</shortName>
    </alternativeName>
    <alternativeName>
        <fullName>Voltage sensor domain-only protein</fullName>
    </alternativeName>
</protein>
<sequence>MEGDNCNKSRHKSHNMINPNYASVRCTQPLPSVIQLRSRNKMIGITEDPSSDSEPVSSNQPLLLTNLSYEVHTFNDNNNHERPAPQEQSTQNTMISMQSEQKSDRFTASNLGMFQYMKFEIGEDGDDHEEEAILTNREKLRHILHSKPIHVAIIVLVVLDSFLVVGELLIDLKVIIVPHGNPAPEILHGFSLSILSIFMVEIALKIIADHRHFIHHKVEVLDAVVVVISFGVDIALIFVGESEALAAIGLLVILRLWRVFRIINGIIVTVKTKADDRVHEIKKKNSELELQIHNLEEKLSQKEQDMSRLHEILRCNNIDIPPTVPLTTSVQIHSTTTASADV</sequence>
<organism>
    <name type="scientific">Ciona intestinalis</name>
    <name type="common">Transparent sea squirt</name>
    <name type="synonym">Ascidia intestinalis</name>
    <dbReference type="NCBI Taxonomy" id="7719"/>
    <lineage>
        <taxon>Eukaryota</taxon>
        <taxon>Metazoa</taxon>
        <taxon>Chordata</taxon>
        <taxon>Tunicata</taxon>
        <taxon>Ascidiacea</taxon>
        <taxon>Phlebobranchia</taxon>
        <taxon>Cionidae</taxon>
        <taxon>Ciona</taxon>
    </lineage>
</organism>
<keyword id="KW-1003">Cell membrane</keyword>
<keyword id="KW-0175">Coiled coil</keyword>
<keyword id="KW-0407">Ion channel</keyword>
<keyword id="KW-0406">Ion transport</keyword>
<keyword id="KW-0472">Membrane</keyword>
<keyword id="KW-1185">Reference proteome</keyword>
<keyword id="KW-0812">Transmembrane</keyword>
<keyword id="KW-1133">Transmembrane helix</keyword>
<keyword id="KW-0813">Transport</keyword>
<keyword id="KW-0851">Voltage-gated channel</keyword>
<name>HVCN1_CIOIN</name>
<gene>
    <name type="primary">HVCN1</name>
    <name type="synonym">VSOP</name>
    <name type="synonym">VSX1</name>
</gene>
<comment type="function">
    <text evidence="1 4">Mediates the voltage-dependent proton permeability of excitable membranes. Forms a proton-selective channel through which protons may pass in accordance with their electrochemical gradient (By similarity).</text>
</comment>
<comment type="activity regulation">
    <text evidence="4">Less sensitive to zinc ions as compared to the mammalian homologs.</text>
</comment>
<comment type="subunit">
    <text evidence="1">Homodimer.</text>
</comment>
<comment type="subcellular location">
    <subcellularLocation>
        <location evidence="5">Membrane</location>
        <topology evidence="5">Multi-pass membrane protein</topology>
    </subcellularLocation>
    <subcellularLocation>
        <location evidence="4">Cell membrane</location>
        <topology evidence="4">Multi-pass membrane protein</topology>
    </subcellularLocation>
</comment>
<comment type="domain">
    <text evidence="1">The segment S4 is probably the voltage-sensor and is characterized by a series of positively charged amino acids at every third position. Unlike other voltage-gated ion channels it lacks the pore domain (By similarity).</text>
</comment>
<comment type="domain">
    <text evidence="1">The C-terminal coiled coil region mediates homodimerization.</text>
</comment>
<comment type="similarity">
    <text evidence="5">Belongs to the hydrogen channel family.</text>
</comment>
<evidence type="ECO:0000250" key="1"/>
<evidence type="ECO:0000255" key="2"/>
<evidence type="ECO:0000256" key="3">
    <source>
        <dbReference type="SAM" id="MobiDB-lite"/>
    </source>
</evidence>
<evidence type="ECO:0000269" key="4">
    <source>
    </source>
</evidence>
<evidence type="ECO:0000305" key="5"/>
<accession>Q1JV40</accession>
<reference key="1">
    <citation type="journal article" date="2006" name="Science">
        <title>A voltage sensor-domain protein is a voltage-gated proton channel.</title>
        <authorList>
            <person name="Sasaki M."/>
            <person name="Takagi M."/>
            <person name="Okamura Y."/>
        </authorList>
    </citation>
    <scope>NUCLEOTIDE SEQUENCE [MRNA]</scope>
    <scope>FUNCTION</scope>
    <scope>ACTIVITY REGULATION</scope>
    <scope>SUBCELLULAR LOCATION</scope>
</reference>